<keyword id="KW-0056">Arginine metabolism</keyword>
<keyword id="KW-0520">NAD</keyword>
<keyword id="KW-0560">Oxidoreductase</keyword>
<gene>
    <name evidence="1" type="primary">astD</name>
    <name type="ordered locus">VSAL_I2735</name>
</gene>
<evidence type="ECO:0000255" key="1">
    <source>
        <dbReference type="HAMAP-Rule" id="MF_01174"/>
    </source>
</evidence>
<feature type="chain" id="PRO_1000138036" description="N-succinylglutamate 5-semialdehyde dehydrogenase">
    <location>
        <begin position="1"/>
        <end position="485"/>
    </location>
</feature>
<feature type="active site" evidence="1">
    <location>
        <position position="243"/>
    </location>
</feature>
<feature type="active site" evidence="1">
    <location>
        <position position="278"/>
    </location>
</feature>
<feature type="binding site" evidence="1">
    <location>
        <begin position="220"/>
        <end position="225"/>
    </location>
    <ligand>
        <name>NAD(+)</name>
        <dbReference type="ChEBI" id="CHEBI:57540"/>
    </ligand>
</feature>
<protein>
    <recommendedName>
        <fullName evidence="1">N-succinylglutamate 5-semialdehyde dehydrogenase</fullName>
        <ecNumber evidence="1">1.2.1.71</ecNumber>
    </recommendedName>
    <alternativeName>
        <fullName evidence="1">Succinylglutamic semialdehyde dehydrogenase</fullName>
        <shortName evidence="1">SGSD</shortName>
    </alternativeName>
</protein>
<dbReference type="EC" id="1.2.1.71" evidence="1"/>
<dbReference type="EMBL" id="FM178379">
    <property type="protein sequence ID" value="CAQ80419.1"/>
    <property type="molecule type" value="Genomic_DNA"/>
</dbReference>
<dbReference type="RefSeq" id="WP_012551179.1">
    <property type="nucleotide sequence ID" value="NC_011312.1"/>
</dbReference>
<dbReference type="SMR" id="B6EML5"/>
<dbReference type="KEGG" id="vsa:VSAL_I2735"/>
<dbReference type="eggNOG" id="COG1012">
    <property type="taxonomic scope" value="Bacteria"/>
</dbReference>
<dbReference type="HOGENOM" id="CLU_005391_1_0_6"/>
<dbReference type="UniPathway" id="UPA00185">
    <property type="reaction ID" value="UER00282"/>
</dbReference>
<dbReference type="Proteomes" id="UP000001730">
    <property type="component" value="Chromosome 1"/>
</dbReference>
<dbReference type="GO" id="GO:0043824">
    <property type="term" value="F:succinylglutamate-semialdehyde dehydrogenase activity"/>
    <property type="evidence" value="ECO:0007669"/>
    <property type="project" value="UniProtKB-EC"/>
</dbReference>
<dbReference type="GO" id="GO:0019544">
    <property type="term" value="P:arginine catabolic process to glutamate"/>
    <property type="evidence" value="ECO:0007669"/>
    <property type="project" value="UniProtKB-UniRule"/>
</dbReference>
<dbReference type="GO" id="GO:0019545">
    <property type="term" value="P:arginine catabolic process to succinate"/>
    <property type="evidence" value="ECO:0007669"/>
    <property type="project" value="UniProtKB-UniRule"/>
</dbReference>
<dbReference type="CDD" id="cd07095">
    <property type="entry name" value="ALDH_SGSD_AstD"/>
    <property type="match status" value="1"/>
</dbReference>
<dbReference type="FunFam" id="3.40.605.10:FF:000010">
    <property type="entry name" value="N-succinylglutamate 5-semialdehyde dehydrogenase"/>
    <property type="match status" value="1"/>
</dbReference>
<dbReference type="Gene3D" id="3.40.605.10">
    <property type="entry name" value="Aldehyde Dehydrogenase, Chain A, domain 1"/>
    <property type="match status" value="1"/>
</dbReference>
<dbReference type="Gene3D" id="3.40.309.10">
    <property type="entry name" value="Aldehyde Dehydrogenase, Chain A, domain 2"/>
    <property type="match status" value="1"/>
</dbReference>
<dbReference type="HAMAP" id="MF_01174">
    <property type="entry name" value="Aldedh_AstD"/>
    <property type="match status" value="1"/>
</dbReference>
<dbReference type="InterPro" id="IPR016161">
    <property type="entry name" value="Ald_DH/histidinol_DH"/>
</dbReference>
<dbReference type="InterPro" id="IPR016163">
    <property type="entry name" value="Ald_DH_C"/>
</dbReference>
<dbReference type="InterPro" id="IPR016160">
    <property type="entry name" value="Ald_DH_CS_CYS"/>
</dbReference>
<dbReference type="InterPro" id="IPR029510">
    <property type="entry name" value="Ald_DH_CS_GLU"/>
</dbReference>
<dbReference type="InterPro" id="IPR016162">
    <property type="entry name" value="Ald_DH_N"/>
</dbReference>
<dbReference type="InterPro" id="IPR015590">
    <property type="entry name" value="Aldehyde_DH_dom"/>
</dbReference>
<dbReference type="InterPro" id="IPR017649">
    <property type="entry name" value="SuccinylGlu_semiald_DH_AstD"/>
</dbReference>
<dbReference type="NCBIfam" id="TIGR03240">
    <property type="entry name" value="arg_catab_astD"/>
    <property type="match status" value="1"/>
</dbReference>
<dbReference type="NCBIfam" id="NF006992">
    <property type="entry name" value="PRK09457.1"/>
    <property type="match status" value="1"/>
</dbReference>
<dbReference type="PANTHER" id="PTHR11699">
    <property type="entry name" value="ALDEHYDE DEHYDROGENASE-RELATED"/>
    <property type="match status" value="1"/>
</dbReference>
<dbReference type="Pfam" id="PF00171">
    <property type="entry name" value="Aldedh"/>
    <property type="match status" value="1"/>
</dbReference>
<dbReference type="SUPFAM" id="SSF53720">
    <property type="entry name" value="ALDH-like"/>
    <property type="match status" value="1"/>
</dbReference>
<dbReference type="PROSITE" id="PS00070">
    <property type="entry name" value="ALDEHYDE_DEHYDR_CYS"/>
    <property type="match status" value="1"/>
</dbReference>
<dbReference type="PROSITE" id="PS00687">
    <property type="entry name" value="ALDEHYDE_DEHYDR_GLU"/>
    <property type="match status" value="1"/>
</dbReference>
<comment type="function">
    <text evidence="1">Catalyzes the NAD-dependent reduction of succinylglutamate semialdehyde into succinylglutamate.</text>
</comment>
<comment type="catalytic activity">
    <reaction evidence="1">
        <text>N-succinyl-L-glutamate 5-semialdehyde + NAD(+) + H2O = N-succinyl-L-glutamate + NADH + 2 H(+)</text>
        <dbReference type="Rhea" id="RHEA:10812"/>
        <dbReference type="ChEBI" id="CHEBI:15377"/>
        <dbReference type="ChEBI" id="CHEBI:15378"/>
        <dbReference type="ChEBI" id="CHEBI:57540"/>
        <dbReference type="ChEBI" id="CHEBI:57945"/>
        <dbReference type="ChEBI" id="CHEBI:58520"/>
        <dbReference type="ChEBI" id="CHEBI:58763"/>
        <dbReference type="EC" id="1.2.1.71"/>
    </reaction>
</comment>
<comment type="pathway">
    <text evidence="1">Amino-acid degradation; L-arginine degradation via AST pathway; L-glutamate and succinate from L-arginine: step 4/5.</text>
</comment>
<comment type="similarity">
    <text evidence="1">Belongs to the aldehyde dehydrogenase family. AstD subfamily.</text>
</comment>
<reference key="1">
    <citation type="journal article" date="2008" name="BMC Genomics">
        <title>The genome sequence of the fish pathogen Aliivibrio salmonicida strain LFI1238 shows extensive evidence of gene decay.</title>
        <authorList>
            <person name="Hjerde E."/>
            <person name="Lorentzen M.S."/>
            <person name="Holden M.T."/>
            <person name="Seeger K."/>
            <person name="Paulsen S."/>
            <person name="Bason N."/>
            <person name="Churcher C."/>
            <person name="Harris D."/>
            <person name="Norbertczak H."/>
            <person name="Quail M.A."/>
            <person name="Sanders S."/>
            <person name="Thurston S."/>
            <person name="Parkhill J."/>
            <person name="Willassen N.P."/>
            <person name="Thomson N.R."/>
        </authorList>
    </citation>
    <scope>NUCLEOTIDE SEQUENCE [LARGE SCALE GENOMIC DNA]</scope>
    <source>
        <strain>LFI1238</strain>
    </source>
</reference>
<name>ASTD_ALISL</name>
<proteinExistence type="inferred from homology"/>
<accession>B6EML5</accession>
<organism>
    <name type="scientific">Aliivibrio salmonicida (strain LFI1238)</name>
    <name type="common">Vibrio salmonicida (strain LFI1238)</name>
    <dbReference type="NCBI Taxonomy" id="316275"/>
    <lineage>
        <taxon>Bacteria</taxon>
        <taxon>Pseudomonadati</taxon>
        <taxon>Pseudomonadota</taxon>
        <taxon>Gammaproteobacteria</taxon>
        <taxon>Vibrionales</taxon>
        <taxon>Vibrionaceae</taxon>
        <taxon>Aliivibrio</taxon>
    </lineage>
</organism>
<sequence length="485" mass="52348">MTHWIAGDWVSGHGETIQSLSPYNSNVVWQGESATKDQVESAVSAARHAFIEWKKQPFEARQVIIERFAALVKENTDKIAEVISKETGKPFWETKTEAGAMVGKIAISIRAYHERTPHKEREAAGNKIVLRHRPLGVMAVFGPYNFPGHLPNGHIVPALLAGNTVVLKPSEQTPWTSEVIMKLWQQAGLPNGVINLVQGARETGEALASAKGIDGLLFTGSANTGHILHRQFSGDTGKMLALEMGGNNPMVISKSFGEQEAAVYTIIQSAFISAGQRCTCARRLYVPIGKAGDELLVRLVEVAKTIVVDQPFAENTPFMGPQISIAAAEFILNAQKNLQDLGGESLLEAKSLGHAFVSPGIIDATNVAELPDEEYFGPLLQVVRYETLEEAVELANDTRYGLSAGLVSTDDSEWEYFVEHIRAGIVNRNRQLTGASGDAPFGGPGASGNMKPSAYYAADYCAYPMASMEGDACEIPAQLSPGLTL</sequence>